<dbReference type="EC" id="3.4.23.-"/>
<dbReference type="EC" id="2.7.7.49"/>
<dbReference type="EC" id="2.7.7.7"/>
<dbReference type="EC" id="3.1.26.4"/>
<dbReference type="EMBL" id="U11581">
    <property type="status" value="NOT_ANNOTATED_CDS"/>
    <property type="molecule type" value="Genomic_DNA"/>
</dbReference>
<dbReference type="EMBL" id="BK006934">
    <property type="protein sequence ID" value="DAA06678.1"/>
    <property type="molecule type" value="Genomic_DNA"/>
</dbReference>
<dbReference type="PIR" id="S52611">
    <property type="entry name" value="S52611"/>
</dbReference>
<dbReference type="RefSeq" id="NP_058133.1">
    <molecule id="P0C2J7-1"/>
    <property type="nucleotide sequence ID" value="NM_001184404.2"/>
</dbReference>
<dbReference type="BioGRID" id="36417">
    <property type="interactions" value="6"/>
</dbReference>
<dbReference type="FunCoup" id="P0C2J7">
    <property type="interactions" value="23"/>
</dbReference>
<dbReference type="MINT" id="P0C2J7"/>
<dbReference type="GlyGen" id="P0C2J7">
    <property type="glycosylation" value="1 site"/>
</dbReference>
<dbReference type="PaxDb" id="4932-YHL009W-B"/>
<dbReference type="PeptideAtlas" id="P0C2J7"/>
<dbReference type="GeneID" id="856380"/>
<dbReference type="KEGG" id="sce:YHL009W-B"/>
<dbReference type="AGR" id="SGD:S000007372"/>
<dbReference type="SGD" id="S000007372">
    <property type="gene designation" value="YHL009W-B"/>
</dbReference>
<dbReference type="VEuPathDB" id="FungiDB:YHL009W-B"/>
<dbReference type="eggNOG" id="KOG0017">
    <property type="taxonomic scope" value="Eukaryota"/>
</dbReference>
<dbReference type="HOGENOM" id="CLU_003908_0_0_1"/>
<dbReference type="InParanoid" id="P0C2J7"/>
<dbReference type="OrthoDB" id="4068312at2759"/>
<dbReference type="Proteomes" id="UP000002311">
    <property type="component" value="Chromosome VIII"/>
</dbReference>
<dbReference type="RNAct" id="P0C2J7">
    <property type="molecule type" value="protein"/>
</dbReference>
<dbReference type="GO" id="GO:0005737">
    <property type="term" value="C:cytoplasm"/>
    <property type="evidence" value="ECO:0007669"/>
    <property type="project" value="UniProtKB-SubCell"/>
</dbReference>
<dbReference type="GO" id="GO:0005634">
    <property type="term" value="C:nucleus"/>
    <property type="evidence" value="ECO:0000314"/>
    <property type="project" value="SGD"/>
</dbReference>
<dbReference type="GO" id="GO:0004190">
    <property type="term" value="F:aspartic-type endopeptidase activity"/>
    <property type="evidence" value="ECO:0007669"/>
    <property type="project" value="UniProtKB-KW"/>
</dbReference>
<dbReference type="GO" id="GO:0005524">
    <property type="term" value="F:ATP binding"/>
    <property type="evidence" value="ECO:0007669"/>
    <property type="project" value="UniProtKB-KW"/>
</dbReference>
<dbReference type="GO" id="GO:0003677">
    <property type="term" value="F:DNA binding"/>
    <property type="evidence" value="ECO:0007669"/>
    <property type="project" value="UniProtKB-KW"/>
</dbReference>
<dbReference type="GO" id="GO:0003887">
    <property type="term" value="F:DNA-directed DNA polymerase activity"/>
    <property type="evidence" value="ECO:0007669"/>
    <property type="project" value="UniProtKB-KW"/>
</dbReference>
<dbReference type="GO" id="GO:0003723">
    <property type="term" value="F:RNA binding"/>
    <property type="evidence" value="ECO:0007669"/>
    <property type="project" value="UniProtKB-KW"/>
</dbReference>
<dbReference type="GO" id="GO:0003964">
    <property type="term" value="F:RNA-directed DNA polymerase activity"/>
    <property type="evidence" value="ECO:0007669"/>
    <property type="project" value="UniProtKB-KW"/>
</dbReference>
<dbReference type="GO" id="GO:0004523">
    <property type="term" value="F:RNA-DNA hybrid ribonuclease activity"/>
    <property type="evidence" value="ECO:0007669"/>
    <property type="project" value="UniProtKB-EC"/>
</dbReference>
<dbReference type="GO" id="GO:0008270">
    <property type="term" value="F:zinc ion binding"/>
    <property type="evidence" value="ECO:0007669"/>
    <property type="project" value="UniProtKB-KW"/>
</dbReference>
<dbReference type="GO" id="GO:0015074">
    <property type="term" value="P:DNA integration"/>
    <property type="evidence" value="ECO:0007669"/>
    <property type="project" value="UniProtKB-KW"/>
</dbReference>
<dbReference type="GO" id="GO:0006310">
    <property type="term" value="P:DNA recombination"/>
    <property type="evidence" value="ECO:0007669"/>
    <property type="project" value="UniProtKB-KW"/>
</dbReference>
<dbReference type="GO" id="GO:0006508">
    <property type="term" value="P:proteolysis"/>
    <property type="evidence" value="ECO:0007669"/>
    <property type="project" value="UniProtKB-KW"/>
</dbReference>
<dbReference type="GO" id="GO:0032196">
    <property type="term" value="P:transposition"/>
    <property type="evidence" value="ECO:0007669"/>
    <property type="project" value="UniProtKB-KW"/>
</dbReference>
<dbReference type="GO" id="GO:0075523">
    <property type="term" value="P:viral translational frameshifting"/>
    <property type="evidence" value="ECO:0007669"/>
    <property type="project" value="UniProtKB-KW"/>
</dbReference>
<dbReference type="Gene3D" id="3.30.420.10">
    <property type="entry name" value="Ribonuclease H-like superfamily/Ribonuclease H"/>
    <property type="match status" value="2"/>
</dbReference>
<dbReference type="InterPro" id="IPR043502">
    <property type="entry name" value="DNA/RNA_pol_sf"/>
</dbReference>
<dbReference type="InterPro" id="IPR001584">
    <property type="entry name" value="Integrase_cat-core"/>
</dbReference>
<dbReference type="InterPro" id="IPR054722">
    <property type="entry name" value="PolX-like_BBD"/>
</dbReference>
<dbReference type="InterPro" id="IPR039537">
    <property type="entry name" value="Retrotran_Ty1/copia-like"/>
</dbReference>
<dbReference type="InterPro" id="IPR012337">
    <property type="entry name" value="RNaseH-like_sf"/>
</dbReference>
<dbReference type="InterPro" id="IPR036397">
    <property type="entry name" value="RNaseH_sf"/>
</dbReference>
<dbReference type="InterPro" id="IPR013103">
    <property type="entry name" value="RVT_2"/>
</dbReference>
<dbReference type="PANTHER" id="PTHR42648">
    <property type="entry name" value="TRANSPOSASE, PUTATIVE-RELATED"/>
    <property type="match status" value="1"/>
</dbReference>
<dbReference type="PANTHER" id="PTHR42648:SF11">
    <property type="entry name" value="TRANSPOSON TY4-P GAG-POL POLYPROTEIN"/>
    <property type="match status" value="1"/>
</dbReference>
<dbReference type="Pfam" id="PF22936">
    <property type="entry name" value="Pol_BBD"/>
    <property type="match status" value="1"/>
</dbReference>
<dbReference type="Pfam" id="PF00665">
    <property type="entry name" value="rve"/>
    <property type="match status" value="1"/>
</dbReference>
<dbReference type="Pfam" id="PF07727">
    <property type="entry name" value="RVT_2"/>
    <property type="match status" value="1"/>
</dbReference>
<dbReference type="SUPFAM" id="SSF56672">
    <property type="entry name" value="DNA/RNA polymerases"/>
    <property type="match status" value="1"/>
</dbReference>
<dbReference type="SUPFAM" id="SSF53098">
    <property type="entry name" value="Ribonuclease H-like"/>
    <property type="match status" value="1"/>
</dbReference>
<dbReference type="PROSITE" id="PS50994">
    <property type="entry name" value="INTEGRASE"/>
    <property type="match status" value="1"/>
</dbReference>
<gene>
    <name type="primary">TY4B-H</name>
    <name type="synonym">YHLWTy4-1 POL</name>
    <name type="ordered locus">YHL009W-B</name>
    <name type="ORF">YHL008W-A</name>
</gene>
<proteinExistence type="inferred from homology"/>
<name>YH41B_YEAST</name>
<protein>
    <recommendedName>
        <fullName>Transposon Ty4-H Gag-Pol polyprotein</fullName>
    </recommendedName>
    <alternativeName>
        <fullName>TY4A-TY4B</fullName>
    </alternativeName>
    <alternativeName>
        <fullName>Transposon Ty4 TYA-TYB polyprotein</fullName>
    </alternativeName>
    <domain>
        <recommendedName>
            <fullName>Capsid protein</fullName>
            <shortName>CA</shortName>
        </recommendedName>
    </domain>
    <domain>
        <recommendedName>
            <fullName>Ty4 protease</fullName>
            <shortName>PR</shortName>
            <ecNumber>3.4.23.-</ecNumber>
        </recommendedName>
    </domain>
    <domain>
        <recommendedName>
            <fullName>Integrase</fullName>
            <shortName>IN</shortName>
        </recommendedName>
    </domain>
    <domain>
        <recommendedName>
            <fullName>Reverse transcriptase/ribonuclease H</fullName>
            <shortName>RT</shortName>
            <shortName>RT-RH</shortName>
            <ecNumber>2.7.7.49</ecNumber>
            <ecNumber>2.7.7.7</ecNumber>
            <ecNumber>3.1.26.4</ecNumber>
        </recommendedName>
    </domain>
</protein>
<feature type="chain" id="PRO_0000279380" description="Transposon Ty4-H Gag-Pol polyprotein">
    <location>
        <begin position="1"/>
        <end position="1802"/>
    </location>
</feature>
<feature type="domain" description="Integrase catalytic" evidence="3">
    <location>
        <begin position="619"/>
        <end position="786"/>
    </location>
</feature>
<feature type="domain" description="Reverse transcriptase Ty1/copia-type">
    <location>
        <begin position="1375"/>
        <end position="1510"/>
    </location>
</feature>
<feature type="domain" description="RNase H Ty1/copia-type">
    <location>
        <begin position="1644"/>
        <end position="1790"/>
    </location>
</feature>
<feature type="region of interest" description="Ty4 protease">
    <location>
        <begin position="381"/>
        <end position="501"/>
    </location>
</feature>
<feature type="region of interest" description="Integrase-type zinc finger-like">
    <location>
        <begin position="539"/>
        <end position="599"/>
    </location>
</feature>
<feature type="region of interest" description="Disordered" evidence="4">
    <location>
        <begin position="1223"/>
        <end position="1248"/>
    </location>
</feature>
<feature type="coiled-coil region" evidence="2">
    <location>
        <begin position="39"/>
        <end position="115"/>
    </location>
</feature>
<feature type="active site" description="For protease activity; shared with dimeric partner" evidence="1">
    <location>
        <position position="414"/>
    </location>
</feature>
<feature type="binding site" evidence="3">
    <location>
        <position position="630"/>
    </location>
    <ligand>
        <name>Mg(2+)</name>
        <dbReference type="ChEBI" id="CHEBI:18420"/>
        <label>1</label>
        <note>catalytic; for integrase activity</note>
    </ligand>
</feature>
<feature type="binding site" evidence="3">
    <location>
        <position position="695"/>
    </location>
    <ligand>
        <name>Mg(2+)</name>
        <dbReference type="ChEBI" id="CHEBI:18420"/>
        <label>1</label>
        <note>catalytic; for integrase activity</note>
    </ligand>
</feature>
<feature type="binding site" evidence="3">
    <location>
        <position position="1383"/>
    </location>
    <ligand>
        <name>Mg(2+)</name>
        <dbReference type="ChEBI" id="CHEBI:18420"/>
        <label>2</label>
        <note>catalytic; for reverse transcriptase activity</note>
    </ligand>
</feature>
<feature type="binding site" evidence="3">
    <location>
        <position position="1462"/>
    </location>
    <ligand>
        <name>Mg(2+)</name>
        <dbReference type="ChEBI" id="CHEBI:18420"/>
        <label>2</label>
        <note>catalytic; for reverse transcriptase activity</note>
    </ligand>
</feature>
<feature type="binding site" evidence="3">
    <location>
        <position position="1463"/>
    </location>
    <ligand>
        <name>Mg(2+)</name>
        <dbReference type="ChEBI" id="CHEBI:18420"/>
        <label>2</label>
        <note>catalytic; for reverse transcriptase activity</note>
    </ligand>
</feature>
<feature type="binding site" evidence="3">
    <location>
        <position position="1644"/>
    </location>
    <ligand>
        <name>Mg(2+)</name>
        <dbReference type="ChEBI" id="CHEBI:18420"/>
        <label>3</label>
        <note>catalytic; for RNase H activity</note>
    </ligand>
</feature>
<feature type="binding site" evidence="3">
    <location>
        <position position="1686"/>
    </location>
    <ligand>
        <name>Mg(2+)</name>
        <dbReference type="ChEBI" id="CHEBI:18420"/>
        <label>3</label>
        <note>catalytic; for RNase H activity</note>
    </ligand>
</feature>
<feature type="binding site" evidence="3">
    <location>
        <position position="1720"/>
    </location>
    <ligand>
        <name>Mg(2+)</name>
        <dbReference type="ChEBI" id="CHEBI:18420"/>
        <label>3</label>
        <note>catalytic; for RNase H activity</note>
    </ligand>
</feature>
<sequence length="1802" mass="207970">MATPVRDETRNVIDDNISARIQSKVKTNDTVRQTPSSLRKVSIKDEQVKQYQRNLNRFKTILNGLKAEEEKLSETDDIQMLAEKLLKLGETIDKVENRIVDLVEKIQLLETNENNNILHEHIDATGTYYLFDTLTSTNKRFYPKDCVFDYRTNNVENIPILLNNFKKFIKKYQFDDVFENDIIEIDPRENEILCKIIKEGLGESLDIMNTNTTDIFRIIDGLKNKYRSLHGRDVRIRAWEKVLVDTTCRNSALLMNKLQKLVLMEKWIFSKCCQDCPNLKDYLQEAIMGTLHESLRNSVKQRLYNIPHNVGINHEEFLINTVIETVIDLSPIADDQIENSCMYCKSVFHCSINCKKKPNRELGLTRPISQKPIIYKVHRDNNNLSPVQNEQKSWNKTQKKSNKVYNSKKLVIIDTGSGVNITNDKTLLHNYEDSNRSTRFFGIGKNSSVSVKGYGYIKIKNGHNNTDNKCLLTYYVPEEESTIISCYDLAKKTKMVLSRKYTRLGNKIIKIKTKIVNGVIHVKMNELIERPSDDSKINAIKPTSSPGFKLNKRSITLEDAHKRMGHTGIQQIENSIKHNHYEESLDLIKEPNEFWCQTCKISKATKRNHYTGSMNNHSTDHEPGSSWCMDIFGPVSSSNADTKRYMLIMVDNNTRYCMTSTHFNKNAETILAQIRKNIQYVETQFDRKVREINSDRGTEFTNDQIEEYFISKGIHHILTSTQDHAANGRAERYIRTIVTDATTLLRQSNLRVKFWEYAVTSATNIRNCLEHKSTGKLPLKAISRQPVTVRLMSFLPFGEKGIIWNHNHKKLKPSGLPSIILCKDPNSYGYKFFIPSKNKIVTSDNYTIPNYTMDGRVRNTQNIYKSHQFSSHNDNEEDQIETVTNLCEALENYEDDNKPITRLEDLFTEEELSQIDSNAKYPSPSNNLEGDLDYVFSDVEESGDYDVESELSTTNTSISTDKNKILSNKDFNSELASTEISISEIDKKGLINTSHIDEDKYDEKVHRIPSIIQEKLVGSKNTIKINDENRISDRIRSKNIGSILNTGLSRCVDITDESITNKDESMHNAKPELIQEQFNKTNHETSFPKEGSIGTNVKFRNTDNEISLKTGDTSLPIKTLESINNHHSNDYSTNKVEKFEKENHHPPPIEDIVDMSDQTDMESNCQDGNNLKELKVTDKNVPTDNGTNVSPRLEQNIEASGSPVQTVNKSAFLNKEFSSLNMKRKRKRHDKNNSLTSYELERDKKRSKRNRVKLIPDNMETVSAQKIRAIYYNEAISKNPDLKEKHEYKQAYHKELQNLKDMKVFDVDVKYSRSEIPDNLIVPTNTIFTKKRNGIYKARIVCRGDTQSPDTYSVITTESLNHNHIKIFLMIANNRNMFMKTLDINHAFLYAKLEEEIYIPHPHDRRCVVKLNKALYGLKQSPKEWNDHLRQYLNGIGLKDNSYTPGLYQTEDKNLMIAVYVDDCVIAASNEQRLDEFINKLKSNFELKITGTLIDDVLDTDILGMDLVYNKRLGTIDLTLKSFINRMDKKYNEELKKIRKSSIPHMSTYKIDPKKDVLQMSEEEFRQGVLKLQQLLGELNYVRHKCRYDINFAVKKVARLVNYPHERVFYMIYKIIQYLVRYKDIGIHYDRDCNKDKKVIAITDASVGSEYDAQSRIGVILWYGMNIFNVYSNKSTNRCVSSTEAELHAIYEGYADSETLKVTLKELGEGDNNDIVMITDSKPAIQGLNRSYQQPKEKFTWIKTEIIKEKIKEKSIKLLKITGKGNIADLLTKPVSASDFKRFIQVLKNKITSQDILASTDY</sequence>
<evidence type="ECO:0000250" key="1"/>
<evidence type="ECO:0000255" key="2"/>
<evidence type="ECO:0000255" key="3">
    <source>
        <dbReference type="PROSITE-ProRule" id="PRU00457"/>
    </source>
</evidence>
<evidence type="ECO:0000256" key="4">
    <source>
        <dbReference type="SAM" id="MobiDB-lite"/>
    </source>
</evidence>
<evidence type="ECO:0000305" key="5"/>
<comment type="function">
    <text evidence="1">Capsid protein (CA) is the structural component of the virus-like particle (VLP), forming the shell that encapsulates the retrotransposons dimeric RNA genome.</text>
</comment>
<comment type="function">
    <text evidence="1">The aspartyl protease (PR) mediates the proteolytic cleavages of the Gag and Gag-Pol polyproteins after assembly of the VLP.</text>
</comment>
<comment type="function">
    <text evidence="1">Reverse transcriptase/ribonuclease H (RT) is a multifunctional enzyme that catalyzes the conversion of the retro-elements RNA genome into dsDNA within the VLP. The enzyme displays a DNA polymerase activity that can copy either DNA or RNA templates, and a ribonuclease H (RNase H) activity that cleaves the RNA strand of RNA-DNA heteroduplexes during plus-strand synthesis and hydrolyzes RNA primers. The conversion leads to a linear dsDNA copy of the retrotransposon that includes long terminal repeats (LTRs) at both ends (By similarity).</text>
</comment>
<comment type="function">
    <text evidence="1">Integrase (IN) targets the VLP to the nucleus, where a subparticle preintegration complex (PIC) containing at least integrase and the newly synthesized dsDNA copy of the retrotransposon must transit the nuclear membrane. Once in the nucleus, integrase performs the integration of the dsDNA into the host genome (By similarity).</text>
</comment>
<comment type="catalytic activity">
    <reaction>
        <text>DNA(n) + a 2'-deoxyribonucleoside 5'-triphosphate = DNA(n+1) + diphosphate</text>
        <dbReference type="Rhea" id="RHEA:22508"/>
        <dbReference type="Rhea" id="RHEA-COMP:17339"/>
        <dbReference type="Rhea" id="RHEA-COMP:17340"/>
        <dbReference type="ChEBI" id="CHEBI:33019"/>
        <dbReference type="ChEBI" id="CHEBI:61560"/>
        <dbReference type="ChEBI" id="CHEBI:173112"/>
        <dbReference type="EC" id="2.7.7.49"/>
    </reaction>
</comment>
<comment type="catalytic activity">
    <reaction>
        <text>DNA(n) + a 2'-deoxyribonucleoside 5'-triphosphate = DNA(n+1) + diphosphate</text>
        <dbReference type="Rhea" id="RHEA:22508"/>
        <dbReference type="Rhea" id="RHEA-COMP:17339"/>
        <dbReference type="Rhea" id="RHEA-COMP:17340"/>
        <dbReference type="ChEBI" id="CHEBI:33019"/>
        <dbReference type="ChEBI" id="CHEBI:61560"/>
        <dbReference type="ChEBI" id="CHEBI:173112"/>
        <dbReference type="EC" id="2.7.7.7"/>
    </reaction>
</comment>
<comment type="catalytic activity">
    <reaction>
        <text>Endonucleolytic cleavage to 5'-phosphomonoester.</text>
        <dbReference type="EC" id="3.1.26.4"/>
    </reaction>
</comment>
<comment type="subunit">
    <text evidence="1">The protease is a homodimer, whose active site consists of two apposed aspartic acid residues.</text>
</comment>
<comment type="subcellular location">
    <subcellularLocation>
        <location>Cytoplasm</location>
    </subcellularLocation>
    <subcellularLocation>
        <location evidence="1">Nucleus</location>
    </subcellularLocation>
</comment>
<comment type="alternative products">
    <event type="ribosomal frameshifting"/>
    <isoform>
        <id>P0C2J7-1</id>
        <name>Transposon Ty4-H Gag-Pol polyprotein</name>
        <sequence type="displayed"/>
    </isoform>
    <isoform>
        <id>Q6Q5P6-1</id>
        <name>Transposon Ty4-H Gag polyprotein</name>
        <sequence type="external"/>
    </isoform>
    <text>The Gag-Pol polyprotein is generated by a +1 ribosomal frameshift.</text>
</comment>
<comment type="domain">
    <text evidence="1">Integrase core domain contains the D-x(n)-D-x(35)-E motif, named for the phylogenetically conserved glutamic acid and aspartic acid residues and the invariant 35 amino acid spacing between the second and third acidic residues. Each acidic residue of the D,D(35)E motif is independently essential for the 3'-processing and strand transfer activities of purified integrase protein (By similarity).</text>
</comment>
<comment type="PTM">
    <text evidence="1 5">Proteolytically processed into capsid protein (CA), Ty4 protease (PR), integrase (IN) and reverse transcriptase/ribonuclease H (RT) proteins (Probable). Initially, virus-like particles (VLPs) are composed of the structural unprocessed proteins Gag and Gag-Pol, and also contain the host initiator methionine tRNA (tRNA(i)-Met) which serves as a primer for minus-strand DNA synthesis, and a dimer of genomic Ty RNA. Processing of the polyproteins occurs within the particle and proceeds by an ordered pathway, called maturation. First, the protease (PR) is released by autocatalytic cleavage of the Gag-Pol polyprotein, and this cleavage is a prerequisite for subsequent processing at the remaining sites to release the mature structural and catalytic proteins. Maturation takes place prior to the RT reaction and is required to produce transposition-competent VLPs (By similarity).</text>
</comment>
<comment type="miscellaneous">
    <text>Retrotransposons are mobile genetic entities that are able to replicate via an RNA intermediate and a reverse transcription step. In contrast to retroviruses, retrotransposons are non-infectious, lack an envelope and remain intracellular. Ty4 retrotransposons belong to the copia elements (pseudoviridae).</text>
</comment>
<comment type="miscellaneous">
    <molecule>Isoform Transposon Ty4-H Gag-Pol polyprotein</molecule>
    <text>Produced by +1 ribosomal frameshifting between codon Leu-362 and Gly-363 of the YHL009W-A ORF.</text>
</comment>
<keyword id="KW-0064">Aspartyl protease</keyword>
<keyword id="KW-0067">ATP-binding</keyword>
<keyword id="KW-0175">Coiled coil</keyword>
<keyword id="KW-0963">Cytoplasm</keyword>
<keyword id="KW-0229">DNA integration</keyword>
<keyword id="KW-0233">DNA recombination</keyword>
<keyword id="KW-0238">DNA-binding</keyword>
<keyword id="KW-0239">DNA-directed DNA polymerase</keyword>
<keyword id="KW-0255">Endonuclease</keyword>
<keyword id="KW-0378">Hydrolase</keyword>
<keyword id="KW-0460">Magnesium</keyword>
<keyword id="KW-0479">Metal-binding</keyword>
<keyword id="KW-0511">Multifunctional enzyme</keyword>
<keyword id="KW-0540">Nuclease</keyword>
<keyword id="KW-0547">Nucleotide-binding</keyword>
<keyword id="KW-0548">Nucleotidyltransferase</keyword>
<keyword id="KW-0539">Nucleus</keyword>
<keyword id="KW-0645">Protease</keyword>
<keyword id="KW-1185">Reference proteome</keyword>
<keyword id="KW-0688">Ribosomal frameshifting</keyword>
<keyword id="KW-0694">RNA-binding</keyword>
<keyword id="KW-0695">RNA-directed DNA polymerase</keyword>
<keyword id="KW-0808">Transferase</keyword>
<keyword id="KW-0814">Transposable element</keyword>
<keyword id="KW-0815">Transposition</keyword>
<keyword id="KW-1188">Viral release from host cell</keyword>
<keyword id="KW-0917">Virion maturation</keyword>
<keyword id="KW-0862">Zinc</keyword>
<keyword id="KW-0863">Zinc-finger</keyword>
<organism>
    <name type="scientific">Saccharomyces cerevisiae (strain ATCC 204508 / S288c)</name>
    <name type="common">Baker's yeast</name>
    <dbReference type="NCBI Taxonomy" id="559292"/>
    <lineage>
        <taxon>Eukaryota</taxon>
        <taxon>Fungi</taxon>
        <taxon>Dikarya</taxon>
        <taxon>Ascomycota</taxon>
        <taxon>Saccharomycotina</taxon>
        <taxon>Saccharomycetes</taxon>
        <taxon>Saccharomycetales</taxon>
        <taxon>Saccharomycetaceae</taxon>
        <taxon>Saccharomyces</taxon>
    </lineage>
</organism>
<reference key="1">
    <citation type="journal article" date="1994" name="Science">
        <title>Complete nucleotide sequence of Saccharomyces cerevisiae chromosome VIII.</title>
        <authorList>
            <person name="Johnston M."/>
            <person name="Andrews S."/>
            <person name="Brinkman R."/>
            <person name="Cooper J."/>
            <person name="Ding H."/>
            <person name="Dover J."/>
            <person name="Du Z."/>
            <person name="Favello A."/>
            <person name="Fulton L."/>
            <person name="Gattung S."/>
            <person name="Geisel C."/>
            <person name="Kirsten J."/>
            <person name="Kucaba T."/>
            <person name="Hillier L.W."/>
            <person name="Jier M."/>
            <person name="Johnston L."/>
            <person name="Langston Y."/>
            <person name="Latreille P."/>
            <person name="Louis E.J."/>
            <person name="Macri C."/>
            <person name="Mardis E."/>
            <person name="Menezes S."/>
            <person name="Mouser L."/>
            <person name="Nhan M."/>
            <person name="Rifkin L."/>
            <person name="Riles L."/>
            <person name="St Peter H."/>
            <person name="Trevaskis E."/>
            <person name="Vaughan K."/>
            <person name="Vignati D."/>
            <person name="Wilcox L."/>
            <person name="Wohldman P."/>
            <person name="Waterston R."/>
            <person name="Wilson R."/>
            <person name="Vaudin M."/>
        </authorList>
    </citation>
    <scope>NUCLEOTIDE SEQUENCE [LARGE SCALE GENOMIC DNA]</scope>
    <source>
        <strain>ATCC 204508 / S288c</strain>
    </source>
</reference>
<reference key="2">
    <citation type="journal article" date="2014" name="G3 (Bethesda)">
        <title>The reference genome sequence of Saccharomyces cerevisiae: Then and now.</title>
        <authorList>
            <person name="Engel S.R."/>
            <person name="Dietrich F.S."/>
            <person name="Fisk D.G."/>
            <person name="Binkley G."/>
            <person name="Balakrishnan R."/>
            <person name="Costanzo M.C."/>
            <person name="Dwight S.S."/>
            <person name="Hitz B.C."/>
            <person name="Karra K."/>
            <person name="Nash R.S."/>
            <person name="Weng S."/>
            <person name="Wong E.D."/>
            <person name="Lloyd P."/>
            <person name="Skrzypek M.S."/>
            <person name="Miyasato S.R."/>
            <person name="Simison M."/>
            <person name="Cherry J.M."/>
        </authorList>
    </citation>
    <scope>GENOME REANNOTATION</scope>
    <source>
        <strain>ATCC 204508 / S288c</strain>
    </source>
</reference>
<reference key="3">
    <citation type="journal article" date="1998" name="Genome Res.">
        <title>Transposable elements and genome organization: a comprehensive survey of retrotransposons revealed by the complete Saccharomyces cerevisiae genome sequence.</title>
        <authorList>
            <person name="Kim J.M."/>
            <person name="Vanguri S."/>
            <person name="Boeke J.D."/>
            <person name="Gabriel A."/>
            <person name="Voytas D.F."/>
        </authorList>
    </citation>
    <scope>NOMENCLATURE</scope>
</reference>
<reference key="4">
    <citation type="journal article" date="2005" name="Cytogenet. Genome Res.">
        <title>Happy together: the life and times of Ty retrotransposons and their hosts.</title>
        <authorList>
            <person name="Lesage P."/>
            <person name="Todeschini A.L."/>
        </authorList>
    </citation>
    <scope>REVIEW</scope>
</reference>
<accession>P0C2J7</accession>
<accession>D3DKQ5</accession>